<gene>
    <name type="primary">saeR</name>
    <name type="ordered locus">SAV0706</name>
</gene>
<feature type="chain" id="PRO_0000295922" description="Response regulator SaeR">
    <location>
        <begin position="1"/>
        <end position="228"/>
    </location>
</feature>
<feature type="domain" description="Response regulatory" evidence="2">
    <location>
        <begin position="3"/>
        <end position="116"/>
    </location>
</feature>
<feature type="DNA-binding region" description="OmpR/PhoB-type" evidence="3">
    <location>
        <begin position="127"/>
        <end position="226"/>
    </location>
</feature>
<feature type="modified residue" description="4-aspartylphosphate" evidence="2">
    <location>
        <position position="51"/>
    </location>
</feature>
<proteinExistence type="inferred from homology"/>
<accession>Q99VR7</accession>
<protein>
    <recommendedName>
        <fullName>Response regulator SaeR</fullName>
    </recommendedName>
    <alternativeName>
        <fullName>Staphylococcus exoprotein expression protein R</fullName>
    </alternativeName>
</protein>
<dbReference type="EMBL" id="BA000017">
    <property type="protein sequence ID" value="BAB56868.1"/>
    <property type="molecule type" value="Genomic_DNA"/>
</dbReference>
<dbReference type="RefSeq" id="WP_000149344.1">
    <property type="nucleotide sequence ID" value="NC_002758.2"/>
</dbReference>
<dbReference type="SMR" id="Q99VR7"/>
<dbReference type="KEGG" id="sav:SAV0706"/>
<dbReference type="HOGENOM" id="CLU_000445_30_4_9"/>
<dbReference type="PhylomeDB" id="Q99VR7"/>
<dbReference type="Proteomes" id="UP000002481">
    <property type="component" value="Chromosome"/>
</dbReference>
<dbReference type="GO" id="GO:0005829">
    <property type="term" value="C:cytosol"/>
    <property type="evidence" value="ECO:0007669"/>
    <property type="project" value="TreeGrafter"/>
</dbReference>
<dbReference type="GO" id="GO:0032993">
    <property type="term" value="C:protein-DNA complex"/>
    <property type="evidence" value="ECO:0007669"/>
    <property type="project" value="TreeGrafter"/>
</dbReference>
<dbReference type="GO" id="GO:0000156">
    <property type="term" value="F:phosphorelay response regulator activity"/>
    <property type="evidence" value="ECO:0007669"/>
    <property type="project" value="TreeGrafter"/>
</dbReference>
<dbReference type="GO" id="GO:0000976">
    <property type="term" value="F:transcription cis-regulatory region binding"/>
    <property type="evidence" value="ECO:0007669"/>
    <property type="project" value="TreeGrafter"/>
</dbReference>
<dbReference type="GO" id="GO:0006355">
    <property type="term" value="P:regulation of DNA-templated transcription"/>
    <property type="evidence" value="ECO:0007669"/>
    <property type="project" value="InterPro"/>
</dbReference>
<dbReference type="CDD" id="cd17574">
    <property type="entry name" value="REC_OmpR"/>
    <property type="match status" value="1"/>
</dbReference>
<dbReference type="CDD" id="cd00383">
    <property type="entry name" value="trans_reg_C"/>
    <property type="match status" value="1"/>
</dbReference>
<dbReference type="FunFam" id="1.10.10.10:FF:000018">
    <property type="entry name" value="DNA-binding response regulator ResD"/>
    <property type="match status" value="1"/>
</dbReference>
<dbReference type="Gene3D" id="3.40.50.2300">
    <property type="match status" value="1"/>
</dbReference>
<dbReference type="Gene3D" id="6.10.250.690">
    <property type="match status" value="1"/>
</dbReference>
<dbReference type="Gene3D" id="1.10.10.10">
    <property type="entry name" value="Winged helix-like DNA-binding domain superfamily/Winged helix DNA-binding domain"/>
    <property type="match status" value="1"/>
</dbReference>
<dbReference type="InterPro" id="IPR011006">
    <property type="entry name" value="CheY-like_superfamily"/>
</dbReference>
<dbReference type="InterPro" id="IPR001867">
    <property type="entry name" value="OmpR/PhoB-type_DNA-bd"/>
</dbReference>
<dbReference type="InterPro" id="IPR001789">
    <property type="entry name" value="Sig_transdc_resp-reg_receiver"/>
</dbReference>
<dbReference type="InterPro" id="IPR039420">
    <property type="entry name" value="WalR-like"/>
</dbReference>
<dbReference type="InterPro" id="IPR036388">
    <property type="entry name" value="WH-like_DNA-bd_sf"/>
</dbReference>
<dbReference type="PANTHER" id="PTHR48111">
    <property type="entry name" value="REGULATOR OF RPOS"/>
    <property type="match status" value="1"/>
</dbReference>
<dbReference type="PANTHER" id="PTHR48111:SF2">
    <property type="entry name" value="RESPONSE REGULATOR SAER"/>
    <property type="match status" value="1"/>
</dbReference>
<dbReference type="Pfam" id="PF00072">
    <property type="entry name" value="Response_reg"/>
    <property type="match status" value="1"/>
</dbReference>
<dbReference type="Pfam" id="PF00486">
    <property type="entry name" value="Trans_reg_C"/>
    <property type="match status" value="1"/>
</dbReference>
<dbReference type="SMART" id="SM00448">
    <property type="entry name" value="REC"/>
    <property type="match status" value="1"/>
</dbReference>
<dbReference type="SMART" id="SM00862">
    <property type="entry name" value="Trans_reg_C"/>
    <property type="match status" value="1"/>
</dbReference>
<dbReference type="SUPFAM" id="SSF52172">
    <property type="entry name" value="CheY-like"/>
    <property type="match status" value="1"/>
</dbReference>
<dbReference type="PROSITE" id="PS51755">
    <property type="entry name" value="OMPR_PHOB"/>
    <property type="match status" value="1"/>
</dbReference>
<dbReference type="PROSITE" id="PS50110">
    <property type="entry name" value="RESPONSE_REGULATORY"/>
    <property type="match status" value="1"/>
</dbReference>
<sequence length="228" mass="26858">MTHLLIVDDEQDIVDICQTYFEYEGYKVTTTTSGKEAISLLSNDIDIMVLDIMMPEVNGYDIVKEMKRQKLDIPFIYLTAKTQEHDTIYALTLGADDYVKKPFSPRELVLRINNLLTRMKKYHHQPVEQLSFDELTLINLSKVVTVNGHEVPMRIKEFELLWYLASRENEVISKSELLEKVWGYDYYEDANTVNVHIHRIREKLEKESFTTYTITTVWGLGYKFERSR</sequence>
<evidence type="ECO:0000250" key="1"/>
<evidence type="ECO:0000255" key="2">
    <source>
        <dbReference type="PROSITE-ProRule" id="PRU00169"/>
    </source>
</evidence>
<evidence type="ECO:0000255" key="3">
    <source>
        <dbReference type="PROSITE-ProRule" id="PRU01091"/>
    </source>
</evidence>
<name>SAER_STAAM</name>
<keyword id="KW-0963">Cytoplasm</keyword>
<keyword id="KW-0238">DNA-binding</keyword>
<keyword id="KW-0597">Phosphoprotein</keyword>
<keyword id="KW-0716">Sensory transduction</keyword>
<keyword id="KW-0804">Transcription</keyword>
<keyword id="KW-0805">Transcription regulation</keyword>
<keyword id="KW-0902">Two-component regulatory system</keyword>
<keyword id="KW-0843">Virulence</keyword>
<reference key="1">
    <citation type="journal article" date="2001" name="Lancet">
        <title>Whole genome sequencing of meticillin-resistant Staphylococcus aureus.</title>
        <authorList>
            <person name="Kuroda M."/>
            <person name="Ohta T."/>
            <person name="Uchiyama I."/>
            <person name="Baba T."/>
            <person name="Yuzawa H."/>
            <person name="Kobayashi I."/>
            <person name="Cui L."/>
            <person name="Oguchi A."/>
            <person name="Aoki K."/>
            <person name="Nagai Y."/>
            <person name="Lian J.-Q."/>
            <person name="Ito T."/>
            <person name="Kanamori M."/>
            <person name="Matsumaru H."/>
            <person name="Maruyama A."/>
            <person name="Murakami H."/>
            <person name="Hosoyama A."/>
            <person name="Mizutani-Ui Y."/>
            <person name="Takahashi N.K."/>
            <person name="Sawano T."/>
            <person name="Inoue R."/>
            <person name="Kaito C."/>
            <person name="Sekimizu K."/>
            <person name="Hirakawa H."/>
            <person name="Kuhara S."/>
            <person name="Goto S."/>
            <person name="Yabuzaki J."/>
            <person name="Kanehisa M."/>
            <person name="Yamashita A."/>
            <person name="Oshima K."/>
            <person name="Furuya K."/>
            <person name="Yoshino C."/>
            <person name="Shiba T."/>
            <person name="Hattori M."/>
            <person name="Ogasawara N."/>
            <person name="Hayashi H."/>
            <person name="Hiramatsu K."/>
        </authorList>
    </citation>
    <scope>NUCLEOTIDE SEQUENCE [LARGE SCALE GENOMIC DNA]</scope>
    <source>
        <strain>Mu50 / ATCC 700699</strain>
    </source>
</reference>
<comment type="function">
    <text evidence="1">Member of the two-component regulatory system SaeR/SaeS involved in the regulation of staphylococcal virulence factors in a strain-dependent fashion. Probably functions as a transcriptional regulator via a specific DNA-binding domain, recognizing motifs near the promoter sequences of target genes (By similarity).</text>
</comment>
<comment type="subcellular location">
    <subcellularLocation>
        <location evidence="1">Cytoplasm</location>
    </subcellularLocation>
</comment>
<comment type="PTM">
    <text evidence="1">Phosphorylated by SaeS.</text>
</comment>
<organism>
    <name type="scientific">Staphylococcus aureus (strain Mu50 / ATCC 700699)</name>
    <dbReference type="NCBI Taxonomy" id="158878"/>
    <lineage>
        <taxon>Bacteria</taxon>
        <taxon>Bacillati</taxon>
        <taxon>Bacillota</taxon>
        <taxon>Bacilli</taxon>
        <taxon>Bacillales</taxon>
        <taxon>Staphylococcaceae</taxon>
        <taxon>Staphylococcus</taxon>
    </lineage>
</organism>